<gene>
    <name evidence="1" type="primary">rpiA</name>
    <name type="ordered locus">Bxeno_A1896</name>
    <name type="ORF">Bxe_A2538</name>
</gene>
<comment type="function">
    <text evidence="1">Catalyzes the reversible conversion of ribose-5-phosphate to ribulose 5-phosphate.</text>
</comment>
<comment type="catalytic activity">
    <reaction evidence="1">
        <text>aldehydo-D-ribose 5-phosphate = D-ribulose 5-phosphate</text>
        <dbReference type="Rhea" id="RHEA:14657"/>
        <dbReference type="ChEBI" id="CHEBI:58121"/>
        <dbReference type="ChEBI" id="CHEBI:58273"/>
        <dbReference type="EC" id="5.3.1.6"/>
    </reaction>
</comment>
<comment type="pathway">
    <text evidence="1">Carbohydrate degradation; pentose phosphate pathway; D-ribose 5-phosphate from D-ribulose 5-phosphate (non-oxidative stage): step 1/1.</text>
</comment>
<comment type="subunit">
    <text evidence="1">Homodimer.</text>
</comment>
<comment type="similarity">
    <text evidence="1">Belongs to the ribose 5-phosphate isomerase family.</text>
</comment>
<name>RPIA_PARXL</name>
<reference key="1">
    <citation type="journal article" date="2006" name="Proc. Natl. Acad. Sci. U.S.A.">
        <title>Burkholderia xenovorans LB400 harbors a multi-replicon, 9.73-Mbp genome shaped for versatility.</title>
        <authorList>
            <person name="Chain P.S.G."/>
            <person name="Denef V.J."/>
            <person name="Konstantinidis K.T."/>
            <person name="Vergez L.M."/>
            <person name="Agullo L."/>
            <person name="Reyes V.L."/>
            <person name="Hauser L."/>
            <person name="Cordova M."/>
            <person name="Gomez L."/>
            <person name="Gonzalez M."/>
            <person name="Land M."/>
            <person name="Lao V."/>
            <person name="Larimer F."/>
            <person name="LiPuma J.J."/>
            <person name="Mahenthiralingam E."/>
            <person name="Malfatti S.A."/>
            <person name="Marx C.J."/>
            <person name="Parnell J.J."/>
            <person name="Ramette A."/>
            <person name="Richardson P."/>
            <person name="Seeger M."/>
            <person name="Smith D."/>
            <person name="Spilker T."/>
            <person name="Sul W.J."/>
            <person name="Tsoi T.V."/>
            <person name="Ulrich L.E."/>
            <person name="Zhulin I.B."/>
            <person name="Tiedje J.M."/>
        </authorList>
    </citation>
    <scope>NUCLEOTIDE SEQUENCE [LARGE SCALE GENOMIC DNA]</scope>
    <source>
        <strain>LB400</strain>
    </source>
</reference>
<organism>
    <name type="scientific">Paraburkholderia xenovorans (strain LB400)</name>
    <dbReference type="NCBI Taxonomy" id="266265"/>
    <lineage>
        <taxon>Bacteria</taxon>
        <taxon>Pseudomonadati</taxon>
        <taxon>Pseudomonadota</taxon>
        <taxon>Betaproteobacteria</taxon>
        <taxon>Burkholderiales</taxon>
        <taxon>Burkholderiaceae</taxon>
        <taxon>Paraburkholderia</taxon>
    </lineage>
</organism>
<feature type="chain" id="PRO_1000016917" description="Ribose-5-phosphate isomerase A">
    <location>
        <begin position="1"/>
        <end position="231"/>
    </location>
</feature>
<feature type="active site" description="Proton acceptor" evidence="1">
    <location>
        <position position="107"/>
    </location>
</feature>
<feature type="binding site" evidence="1">
    <location>
        <begin position="32"/>
        <end position="35"/>
    </location>
    <ligand>
        <name>substrate</name>
    </ligand>
</feature>
<feature type="binding site" evidence="1">
    <location>
        <begin position="85"/>
        <end position="88"/>
    </location>
    <ligand>
        <name>substrate</name>
    </ligand>
</feature>
<feature type="binding site" evidence="1">
    <location>
        <begin position="98"/>
        <end position="101"/>
    </location>
    <ligand>
        <name>substrate</name>
    </ligand>
</feature>
<feature type="binding site" evidence="1">
    <location>
        <position position="125"/>
    </location>
    <ligand>
        <name>substrate</name>
    </ligand>
</feature>
<keyword id="KW-0413">Isomerase</keyword>
<keyword id="KW-1185">Reference proteome</keyword>
<accession>Q13ZQ5</accession>
<proteinExistence type="inferred from homology"/>
<dbReference type="EC" id="5.3.1.6" evidence="1"/>
<dbReference type="EMBL" id="CP000270">
    <property type="protein sequence ID" value="ABE30434.1"/>
    <property type="molecule type" value="Genomic_DNA"/>
</dbReference>
<dbReference type="RefSeq" id="WP_011488091.1">
    <property type="nucleotide sequence ID" value="NC_007951.1"/>
</dbReference>
<dbReference type="SMR" id="Q13ZQ5"/>
<dbReference type="STRING" id="266265.Bxe_A2538"/>
<dbReference type="KEGG" id="bxb:DR64_233"/>
<dbReference type="KEGG" id="bxe:Bxe_A2538"/>
<dbReference type="PATRIC" id="fig|266265.5.peg.1981"/>
<dbReference type="eggNOG" id="COG0120">
    <property type="taxonomic scope" value="Bacteria"/>
</dbReference>
<dbReference type="OrthoDB" id="5870696at2"/>
<dbReference type="UniPathway" id="UPA00115">
    <property type="reaction ID" value="UER00412"/>
</dbReference>
<dbReference type="Proteomes" id="UP000001817">
    <property type="component" value="Chromosome 1"/>
</dbReference>
<dbReference type="GO" id="GO:0005829">
    <property type="term" value="C:cytosol"/>
    <property type="evidence" value="ECO:0007669"/>
    <property type="project" value="TreeGrafter"/>
</dbReference>
<dbReference type="GO" id="GO:0004751">
    <property type="term" value="F:ribose-5-phosphate isomerase activity"/>
    <property type="evidence" value="ECO:0007669"/>
    <property type="project" value="UniProtKB-UniRule"/>
</dbReference>
<dbReference type="GO" id="GO:0006014">
    <property type="term" value="P:D-ribose metabolic process"/>
    <property type="evidence" value="ECO:0007669"/>
    <property type="project" value="TreeGrafter"/>
</dbReference>
<dbReference type="GO" id="GO:0009052">
    <property type="term" value="P:pentose-phosphate shunt, non-oxidative branch"/>
    <property type="evidence" value="ECO:0007669"/>
    <property type="project" value="UniProtKB-UniRule"/>
</dbReference>
<dbReference type="CDD" id="cd01398">
    <property type="entry name" value="RPI_A"/>
    <property type="match status" value="1"/>
</dbReference>
<dbReference type="FunFam" id="3.40.50.1360:FF:000001">
    <property type="entry name" value="Ribose-5-phosphate isomerase A"/>
    <property type="match status" value="1"/>
</dbReference>
<dbReference type="Gene3D" id="3.30.70.260">
    <property type="match status" value="1"/>
</dbReference>
<dbReference type="Gene3D" id="3.40.50.1360">
    <property type="match status" value="1"/>
</dbReference>
<dbReference type="HAMAP" id="MF_00170">
    <property type="entry name" value="Rib_5P_isom_A"/>
    <property type="match status" value="1"/>
</dbReference>
<dbReference type="InterPro" id="IPR037171">
    <property type="entry name" value="NagB/RpiA_transferase-like"/>
</dbReference>
<dbReference type="InterPro" id="IPR020672">
    <property type="entry name" value="Ribose5P_isomerase_typA_subgr"/>
</dbReference>
<dbReference type="InterPro" id="IPR004788">
    <property type="entry name" value="Ribose5P_isomerase_type_A"/>
</dbReference>
<dbReference type="NCBIfam" id="NF001924">
    <property type="entry name" value="PRK00702.1"/>
    <property type="match status" value="1"/>
</dbReference>
<dbReference type="NCBIfam" id="TIGR00021">
    <property type="entry name" value="rpiA"/>
    <property type="match status" value="1"/>
</dbReference>
<dbReference type="PANTHER" id="PTHR11934">
    <property type="entry name" value="RIBOSE-5-PHOSPHATE ISOMERASE"/>
    <property type="match status" value="1"/>
</dbReference>
<dbReference type="PANTHER" id="PTHR11934:SF0">
    <property type="entry name" value="RIBOSE-5-PHOSPHATE ISOMERASE"/>
    <property type="match status" value="1"/>
</dbReference>
<dbReference type="Pfam" id="PF06026">
    <property type="entry name" value="Rib_5-P_isom_A"/>
    <property type="match status" value="1"/>
</dbReference>
<dbReference type="SUPFAM" id="SSF75445">
    <property type="entry name" value="D-ribose-5-phosphate isomerase (RpiA), lid domain"/>
    <property type="match status" value="1"/>
</dbReference>
<dbReference type="SUPFAM" id="SSF100950">
    <property type="entry name" value="NagB/RpiA/CoA transferase-like"/>
    <property type="match status" value="1"/>
</dbReference>
<sequence>MTQDELKQLVGQAAADYVNANVPEGSVIGVGTGSTANCFIDALAAGKTRYRGAVSSSLATTARLQSHGFKVLDLNEIDSLPVYVDGADEIDHSGAMIKGGGGALTREKIVASVSDVFVCIADASKLVETLGSFPLPIEVVPMARTSIGRRVTALGGVPVVRVTKEGVPFITDNGNEIIDVKGLRISDPRTLETHVNAWPGVVTVGLFASRGADLCLLGTDTGVDTIRFSKG</sequence>
<evidence type="ECO:0000255" key="1">
    <source>
        <dbReference type="HAMAP-Rule" id="MF_00170"/>
    </source>
</evidence>
<protein>
    <recommendedName>
        <fullName evidence="1">Ribose-5-phosphate isomerase A</fullName>
        <ecNumber evidence="1">5.3.1.6</ecNumber>
    </recommendedName>
    <alternativeName>
        <fullName evidence="1">Phosphoriboisomerase A</fullName>
        <shortName evidence="1">PRI</shortName>
    </alternativeName>
</protein>